<accession>P0ABC5</accession>
<accession>P25661</accession>
<name>HFLC_ECO57</name>
<dbReference type="EMBL" id="AE005174">
    <property type="protein sequence ID" value="AAG59371.1"/>
    <property type="molecule type" value="Genomic_DNA"/>
</dbReference>
<dbReference type="EMBL" id="BA000007">
    <property type="protein sequence ID" value="BAB38574.1"/>
    <property type="molecule type" value="Genomic_DNA"/>
</dbReference>
<dbReference type="PIR" id="G86113">
    <property type="entry name" value="G86113"/>
</dbReference>
<dbReference type="PIR" id="G91272">
    <property type="entry name" value="G91272"/>
</dbReference>
<dbReference type="RefSeq" id="NP_313178.1">
    <property type="nucleotide sequence ID" value="NC_002695.1"/>
</dbReference>
<dbReference type="RefSeq" id="WP_001232412.1">
    <property type="nucleotide sequence ID" value="NZ_VOAI01000008.1"/>
</dbReference>
<dbReference type="SMR" id="P0ABC5"/>
<dbReference type="STRING" id="155864.Z5782"/>
<dbReference type="MEROPS" id="I87.001"/>
<dbReference type="GeneID" id="914054"/>
<dbReference type="GeneID" id="93777646"/>
<dbReference type="KEGG" id="ece:Z5782"/>
<dbReference type="KEGG" id="ecs:ECs_5151"/>
<dbReference type="PATRIC" id="fig|386585.9.peg.5384"/>
<dbReference type="eggNOG" id="COG0330">
    <property type="taxonomic scope" value="Bacteria"/>
</dbReference>
<dbReference type="HOGENOM" id="CLU_059167_3_0_6"/>
<dbReference type="OMA" id="WDGDPNQ"/>
<dbReference type="Proteomes" id="UP000000558">
    <property type="component" value="Chromosome"/>
</dbReference>
<dbReference type="Proteomes" id="UP000002519">
    <property type="component" value="Chromosome"/>
</dbReference>
<dbReference type="GO" id="GO:0005886">
    <property type="term" value="C:plasma membrane"/>
    <property type="evidence" value="ECO:0007669"/>
    <property type="project" value="UniProtKB-SubCell"/>
</dbReference>
<dbReference type="CDD" id="cd03405">
    <property type="entry name" value="SPFH_HflC"/>
    <property type="match status" value="1"/>
</dbReference>
<dbReference type="Gene3D" id="3.30.479.30">
    <property type="entry name" value="Band 7 domain"/>
    <property type="match status" value="1"/>
</dbReference>
<dbReference type="InterPro" id="IPR001107">
    <property type="entry name" value="Band_7"/>
</dbReference>
<dbReference type="InterPro" id="IPR036013">
    <property type="entry name" value="Band_7/SPFH_dom_sf"/>
</dbReference>
<dbReference type="InterPro" id="IPR010200">
    <property type="entry name" value="HflC"/>
</dbReference>
<dbReference type="NCBIfam" id="TIGR01932">
    <property type="entry name" value="hflC"/>
    <property type="match status" value="1"/>
</dbReference>
<dbReference type="NCBIfam" id="NF008259">
    <property type="entry name" value="PRK11029.1"/>
    <property type="match status" value="1"/>
</dbReference>
<dbReference type="PANTHER" id="PTHR42911">
    <property type="entry name" value="MODULATOR OF FTSH PROTEASE HFLC"/>
    <property type="match status" value="1"/>
</dbReference>
<dbReference type="PANTHER" id="PTHR42911:SF1">
    <property type="entry name" value="MODULATOR OF FTSH PROTEASE HFLC"/>
    <property type="match status" value="1"/>
</dbReference>
<dbReference type="Pfam" id="PF01145">
    <property type="entry name" value="Band_7"/>
    <property type="match status" value="1"/>
</dbReference>
<dbReference type="PIRSF" id="PIRSF005651">
    <property type="entry name" value="HflC"/>
    <property type="match status" value="1"/>
</dbReference>
<dbReference type="SMART" id="SM00244">
    <property type="entry name" value="PHB"/>
    <property type="match status" value="1"/>
</dbReference>
<dbReference type="SUPFAM" id="SSF117892">
    <property type="entry name" value="Band 7/SPFH domain"/>
    <property type="match status" value="2"/>
</dbReference>
<proteinExistence type="inferred from homology"/>
<keyword id="KW-0997">Cell inner membrane</keyword>
<keyword id="KW-1003">Cell membrane</keyword>
<keyword id="KW-0472">Membrane</keyword>
<keyword id="KW-1185">Reference proteome</keyword>
<keyword id="KW-0735">Signal-anchor</keyword>
<keyword id="KW-0812">Transmembrane</keyword>
<keyword id="KW-1133">Transmembrane helix</keyword>
<feature type="chain" id="PRO_0000094074" description="Modulator of FtsH protease HflC">
    <location>
        <begin position="1"/>
        <end position="334"/>
    </location>
</feature>
<feature type="topological domain" description="Cytoplasmic" evidence="1">
    <location>
        <begin position="1"/>
        <end position="2"/>
    </location>
</feature>
<feature type="transmembrane region" description="Helical" evidence="1">
    <location>
        <begin position="3"/>
        <end position="23"/>
    </location>
</feature>
<feature type="topological domain" description="Periplasmic" evidence="1">
    <location>
        <begin position="24"/>
        <end position="334"/>
    </location>
</feature>
<protein>
    <recommendedName>
        <fullName>Modulator of FtsH protease HflC</fullName>
    </recommendedName>
</protein>
<gene>
    <name type="primary">hflC</name>
    <name type="ordered locus">Z5782</name>
    <name type="ordered locus">ECs5151</name>
</gene>
<reference key="1">
    <citation type="journal article" date="2001" name="Nature">
        <title>Genome sequence of enterohaemorrhagic Escherichia coli O157:H7.</title>
        <authorList>
            <person name="Perna N.T."/>
            <person name="Plunkett G. III"/>
            <person name="Burland V."/>
            <person name="Mau B."/>
            <person name="Glasner J.D."/>
            <person name="Rose D.J."/>
            <person name="Mayhew G.F."/>
            <person name="Evans P.S."/>
            <person name="Gregor J."/>
            <person name="Kirkpatrick H.A."/>
            <person name="Posfai G."/>
            <person name="Hackett J."/>
            <person name="Klink S."/>
            <person name="Boutin A."/>
            <person name="Shao Y."/>
            <person name="Miller L."/>
            <person name="Grotbeck E.J."/>
            <person name="Davis N.W."/>
            <person name="Lim A."/>
            <person name="Dimalanta E.T."/>
            <person name="Potamousis K."/>
            <person name="Apodaca J."/>
            <person name="Anantharaman T.S."/>
            <person name="Lin J."/>
            <person name="Yen G."/>
            <person name="Schwartz D.C."/>
            <person name="Welch R.A."/>
            <person name="Blattner F.R."/>
        </authorList>
    </citation>
    <scope>NUCLEOTIDE SEQUENCE [LARGE SCALE GENOMIC DNA]</scope>
    <source>
        <strain>O157:H7 / EDL933 / ATCC 700927 / EHEC</strain>
    </source>
</reference>
<reference key="2">
    <citation type="journal article" date="2001" name="DNA Res.">
        <title>Complete genome sequence of enterohemorrhagic Escherichia coli O157:H7 and genomic comparison with a laboratory strain K-12.</title>
        <authorList>
            <person name="Hayashi T."/>
            <person name="Makino K."/>
            <person name="Ohnishi M."/>
            <person name="Kurokawa K."/>
            <person name="Ishii K."/>
            <person name="Yokoyama K."/>
            <person name="Han C.-G."/>
            <person name="Ohtsubo E."/>
            <person name="Nakayama K."/>
            <person name="Murata T."/>
            <person name="Tanaka M."/>
            <person name="Tobe T."/>
            <person name="Iida T."/>
            <person name="Takami H."/>
            <person name="Honda T."/>
            <person name="Sasakawa C."/>
            <person name="Ogasawara N."/>
            <person name="Yasunaga T."/>
            <person name="Kuhara S."/>
            <person name="Shiba T."/>
            <person name="Hattori M."/>
            <person name="Shinagawa H."/>
        </authorList>
    </citation>
    <scope>NUCLEOTIDE SEQUENCE [LARGE SCALE GENOMIC DNA]</scope>
    <source>
        <strain>O157:H7 / Sakai / RIMD 0509952 / EHEC</strain>
    </source>
</reference>
<comment type="function">
    <text evidence="1">HflC and HflK help govern the stability of phage lambda cII protein, and thereby control the lysogenization frequency of phage lambda. HflKC inhibits the SecY-degrading activity of FtsH, possibly helping quality control of integral membrane proteins (By similarity).</text>
</comment>
<comment type="subunit">
    <text evidence="1">HflC and HflK interact to form a complex, originally called HflA, now called HflKC. HflKC interacts with FtsH; complex formation is stimulated by ATP, and with YccA (By similarity).</text>
</comment>
<comment type="subcellular location">
    <subcellularLocation>
        <location evidence="1">Cell inner membrane</location>
        <topology evidence="1">Single-pass type II membrane protein</topology>
    </subcellularLocation>
</comment>
<comment type="similarity">
    <text evidence="2">Belongs to the band 7/mec-2 family. HflC subfamily.</text>
</comment>
<sequence length="334" mass="37650">MRKSVIAIIIIVLVVLYMSVFVVKEGERGITLRFGKVLRDDDNKPLVYEPGLHFKIPFIETVKMLDARIQTMDNQADRFVTKEKKDLIVDSYIKWRISDFSRYYLATGGGDISQAEVLLKRKFSDRLRSEIGRLDVKDIVTDSRGRLTLEVRDALNSGSAGTEDEVTTPAADNAIAEAAERVTAETKGKVPVINPNSMAALGIEVVDVRIKQINLPTEVSEAIYNRMRAEREAVARRHRSQGQEEAEKLRATADYEVTRTLAEAERQGRIMRGEGDAEAAKLFADAFSKDPDFYAFIRSLRAYENSFSGNQDVMVMSPDSDFFRYMKTPTSATR</sequence>
<organism>
    <name type="scientific">Escherichia coli O157:H7</name>
    <dbReference type="NCBI Taxonomy" id="83334"/>
    <lineage>
        <taxon>Bacteria</taxon>
        <taxon>Pseudomonadati</taxon>
        <taxon>Pseudomonadota</taxon>
        <taxon>Gammaproteobacteria</taxon>
        <taxon>Enterobacterales</taxon>
        <taxon>Enterobacteriaceae</taxon>
        <taxon>Escherichia</taxon>
    </lineage>
</organism>
<evidence type="ECO:0000250" key="1"/>
<evidence type="ECO:0000305" key="2"/>